<sequence>MSNLTGTDKSVILLMTIGEDRAAEVFKHLSQREVQTLSAAMANVTQISNKQLTDVLAEFEQEAEQFAALNINANDYLRSVLVKALGEERAASLLEDILETRDTASGIETLNFMEPQSAADLIRDEHPQIIATILVHLKRAQAADILALFDERLRHDVMLRIATFGGVQPAALAELTEVLNGLLDGQNLKRSKMGGVRTAAEIINLMKTQQEEAVITAVREFDGELAQKIIDEMFLFENLVDVDDRSIQRLLQEVDSESLLIALKGAEQPLREKFLRNMSQRAADILRDDLANRGPVRLSQVENEQKAILLIVRRLAETGEMVIGSGEDTYV</sequence>
<keyword id="KW-0975">Bacterial flagellum</keyword>
<keyword id="KW-0997">Cell inner membrane</keyword>
<keyword id="KW-1003">Cell membrane</keyword>
<keyword id="KW-0145">Chemotaxis</keyword>
<keyword id="KW-0283">Flagellar rotation</keyword>
<keyword id="KW-0472">Membrane</keyword>
<keyword id="KW-1185">Reference proteome</keyword>
<accession>P0ABZ2</accession>
<accession>P31067</accession>
<accession>P76915</accession>
<gene>
    <name type="primary">fliG</name>
    <name type="ordered locus">c2355</name>
</gene>
<organism>
    <name type="scientific">Escherichia coli O6:H1 (strain CFT073 / ATCC 700928 / UPEC)</name>
    <dbReference type="NCBI Taxonomy" id="199310"/>
    <lineage>
        <taxon>Bacteria</taxon>
        <taxon>Pseudomonadati</taxon>
        <taxon>Pseudomonadota</taxon>
        <taxon>Gammaproteobacteria</taxon>
        <taxon>Enterobacterales</taxon>
        <taxon>Enterobacteriaceae</taxon>
        <taxon>Escherichia</taxon>
    </lineage>
</organism>
<protein>
    <recommendedName>
        <fullName>Flagellar motor switch protein FliG</fullName>
    </recommendedName>
</protein>
<reference key="1">
    <citation type="journal article" date="2002" name="Proc. Natl. Acad. Sci. U.S.A.">
        <title>Extensive mosaic structure revealed by the complete genome sequence of uropathogenic Escherichia coli.</title>
        <authorList>
            <person name="Welch R.A."/>
            <person name="Burland V."/>
            <person name="Plunkett G. III"/>
            <person name="Redford P."/>
            <person name="Roesch P."/>
            <person name="Rasko D."/>
            <person name="Buckles E.L."/>
            <person name="Liou S.-R."/>
            <person name="Boutin A."/>
            <person name="Hackett J."/>
            <person name="Stroud D."/>
            <person name="Mayhew G.F."/>
            <person name="Rose D.J."/>
            <person name="Zhou S."/>
            <person name="Schwartz D.C."/>
            <person name="Perna N.T."/>
            <person name="Mobley H.L.T."/>
            <person name="Donnenberg M.S."/>
            <person name="Blattner F.R."/>
        </authorList>
    </citation>
    <scope>NUCLEOTIDE SEQUENCE [LARGE SCALE GENOMIC DNA]</scope>
    <source>
        <strain>CFT073 / ATCC 700928 / UPEC</strain>
    </source>
</reference>
<feature type="chain" id="PRO_0000184091" description="Flagellar motor switch protein FliG">
    <location>
        <begin position="1"/>
        <end position="331"/>
    </location>
</feature>
<feature type="short sequence motif" description="Part of the EHPQR-motif">
    <location>
        <begin position="125"/>
        <end position="128"/>
    </location>
</feature>
<feature type="site" description="Part of the EHPQR-motif">
    <location>
        <position position="160"/>
    </location>
</feature>
<comment type="function">
    <text evidence="1">FliG is one of three proteins (FliG, FliN, FliM) that forms the rotor-mounted switch complex (C ring), located at the base of the basal body. This complex interacts with the CheY and CheZ chemotaxis proteins, in addition to contacting components of the motor that determine the direction of flagellar rotation (By similarity).</text>
</comment>
<comment type="subcellular location">
    <subcellularLocation>
        <location evidence="1">Cell inner membrane</location>
        <topology evidence="1">Peripheral membrane protein</topology>
        <orientation evidence="1">Cytoplasmic side</orientation>
    </subcellularLocation>
    <subcellularLocation>
        <location evidence="1">Bacterial flagellum basal body</location>
    </subcellularLocation>
</comment>
<comment type="similarity">
    <text evidence="2">Belongs to the FliG family.</text>
</comment>
<dbReference type="EMBL" id="AE014075">
    <property type="protein sequence ID" value="AAN80814.1"/>
    <property type="molecule type" value="Genomic_DNA"/>
</dbReference>
<dbReference type="RefSeq" id="WP_000067950.1">
    <property type="nucleotide sequence ID" value="NZ_CP051263.1"/>
</dbReference>
<dbReference type="SMR" id="P0ABZ2"/>
<dbReference type="STRING" id="199310.c2355"/>
<dbReference type="GeneID" id="75205820"/>
<dbReference type="KEGG" id="ecc:c2355"/>
<dbReference type="eggNOG" id="COG1536">
    <property type="taxonomic scope" value="Bacteria"/>
</dbReference>
<dbReference type="HOGENOM" id="CLU_047835_2_0_6"/>
<dbReference type="BioCyc" id="ECOL199310:C2355-MONOMER"/>
<dbReference type="Proteomes" id="UP000001410">
    <property type="component" value="Chromosome"/>
</dbReference>
<dbReference type="GO" id="GO:0009425">
    <property type="term" value="C:bacterial-type flagellum basal body"/>
    <property type="evidence" value="ECO:0007669"/>
    <property type="project" value="UniProtKB-SubCell"/>
</dbReference>
<dbReference type="GO" id="GO:0005886">
    <property type="term" value="C:plasma membrane"/>
    <property type="evidence" value="ECO:0007669"/>
    <property type="project" value="UniProtKB-SubCell"/>
</dbReference>
<dbReference type="GO" id="GO:0003774">
    <property type="term" value="F:cytoskeletal motor activity"/>
    <property type="evidence" value="ECO:0007669"/>
    <property type="project" value="InterPro"/>
</dbReference>
<dbReference type="GO" id="GO:0071973">
    <property type="term" value="P:bacterial-type flagellum-dependent cell motility"/>
    <property type="evidence" value="ECO:0007669"/>
    <property type="project" value="InterPro"/>
</dbReference>
<dbReference type="GO" id="GO:0006935">
    <property type="term" value="P:chemotaxis"/>
    <property type="evidence" value="ECO:0007669"/>
    <property type="project" value="UniProtKB-KW"/>
</dbReference>
<dbReference type="FunFam" id="1.10.220.30:FF:000001">
    <property type="entry name" value="Flagellar motor switch protein FliG"/>
    <property type="match status" value="1"/>
</dbReference>
<dbReference type="FunFam" id="1.10.220.30:FF:000002">
    <property type="entry name" value="Flagellar motor switch protein FliG"/>
    <property type="match status" value="1"/>
</dbReference>
<dbReference type="FunFam" id="1.10.220.30:FF:000003">
    <property type="entry name" value="Flagellar motor switch protein FliG"/>
    <property type="match status" value="1"/>
</dbReference>
<dbReference type="Gene3D" id="1.10.220.30">
    <property type="match status" value="3"/>
</dbReference>
<dbReference type="InterPro" id="IPR000090">
    <property type="entry name" value="Flg_Motor_Flig"/>
</dbReference>
<dbReference type="InterPro" id="IPR023087">
    <property type="entry name" value="Flg_Motor_Flig_C"/>
</dbReference>
<dbReference type="InterPro" id="IPR011002">
    <property type="entry name" value="FliG_a-hlx"/>
</dbReference>
<dbReference type="InterPro" id="IPR032779">
    <property type="entry name" value="FliG_M"/>
</dbReference>
<dbReference type="InterPro" id="IPR028263">
    <property type="entry name" value="FliG_N"/>
</dbReference>
<dbReference type="NCBIfam" id="TIGR00207">
    <property type="entry name" value="fliG"/>
    <property type="match status" value="1"/>
</dbReference>
<dbReference type="PANTHER" id="PTHR30534">
    <property type="entry name" value="FLAGELLAR MOTOR SWITCH PROTEIN FLIG"/>
    <property type="match status" value="1"/>
</dbReference>
<dbReference type="PANTHER" id="PTHR30534:SF0">
    <property type="entry name" value="FLAGELLAR MOTOR SWITCH PROTEIN FLIG"/>
    <property type="match status" value="1"/>
</dbReference>
<dbReference type="Pfam" id="PF01706">
    <property type="entry name" value="FliG_C"/>
    <property type="match status" value="1"/>
</dbReference>
<dbReference type="Pfam" id="PF14841">
    <property type="entry name" value="FliG_M"/>
    <property type="match status" value="1"/>
</dbReference>
<dbReference type="Pfam" id="PF14842">
    <property type="entry name" value="FliG_N"/>
    <property type="match status" value="1"/>
</dbReference>
<dbReference type="PIRSF" id="PIRSF003161">
    <property type="entry name" value="FliG"/>
    <property type="match status" value="1"/>
</dbReference>
<dbReference type="PRINTS" id="PR00954">
    <property type="entry name" value="FLGMOTORFLIG"/>
</dbReference>
<dbReference type="SUPFAM" id="SSF48029">
    <property type="entry name" value="FliG"/>
    <property type="match status" value="2"/>
</dbReference>
<evidence type="ECO:0000250" key="1"/>
<evidence type="ECO:0000305" key="2"/>
<proteinExistence type="inferred from homology"/>
<name>FLIG_ECOL6</name>